<protein>
    <recommendedName>
        <fullName evidence="1">Small ribosomal subunit protein uS15</fullName>
    </recommendedName>
    <alternativeName>
        <fullName evidence="2">30S ribosomal protein S15</fullName>
    </alternativeName>
</protein>
<accession>A6TEI4</accession>
<gene>
    <name evidence="1" type="primary">rpsO</name>
    <name type="ordered locus">KPN78578_35440</name>
    <name type="ORF">KPN_03573</name>
</gene>
<reference key="1">
    <citation type="submission" date="2006-09" db="EMBL/GenBank/DDBJ databases">
        <authorList>
            <consortium name="The Klebsiella pneumonia Genome Sequencing Project"/>
            <person name="McClelland M."/>
            <person name="Sanderson E.K."/>
            <person name="Spieth J."/>
            <person name="Clifton W.S."/>
            <person name="Latreille P."/>
            <person name="Sabo A."/>
            <person name="Pepin K."/>
            <person name="Bhonagiri V."/>
            <person name="Porwollik S."/>
            <person name="Ali J."/>
            <person name="Wilson R.K."/>
        </authorList>
    </citation>
    <scope>NUCLEOTIDE SEQUENCE [LARGE SCALE GENOMIC DNA]</scope>
    <source>
        <strain>ATCC 700721 / MGH 78578</strain>
    </source>
</reference>
<feature type="chain" id="PRO_1000054796" description="Small ribosomal subunit protein uS15">
    <location>
        <begin position="1"/>
        <end position="89"/>
    </location>
</feature>
<dbReference type="EMBL" id="CP000647">
    <property type="protein sequence ID" value="ABR78968.1"/>
    <property type="molecule type" value="Genomic_DNA"/>
</dbReference>
<dbReference type="RefSeq" id="WP_002918244.1">
    <property type="nucleotide sequence ID" value="NC_009648.1"/>
</dbReference>
<dbReference type="SMR" id="A6TEI4"/>
<dbReference type="STRING" id="272620.KPN_03573"/>
<dbReference type="jPOST" id="A6TEI4"/>
<dbReference type="PaxDb" id="272620-KPN_03573"/>
<dbReference type="EnsemblBacteria" id="ABR78968">
    <property type="protein sequence ID" value="ABR78968"/>
    <property type="gene ID" value="KPN_03573"/>
</dbReference>
<dbReference type="GeneID" id="97393312"/>
<dbReference type="KEGG" id="kpn:KPN_03573"/>
<dbReference type="HOGENOM" id="CLU_148518_0_0_6"/>
<dbReference type="Proteomes" id="UP000000265">
    <property type="component" value="Chromosome"/>
</dbReference>
<dbReference type="GO" id="GO:0022627">
    <property type="term" value="C:cytosolic small ribosomal subunit"/>
    <property type="evidence" value="ECO:0007669"/>
    <property type="project" value="TreeGrafter"/>
</dbReference>
<dbReference type="GO" id="GO:0019843">
    <property type="term" value="F:rRNA binding"/>
    <property type="evidence" value="ECO:0007669"/>
    <property type="project" value="UniProtKB-UniRule"/>
</dbReference>
<dbReference type="GO" id="GO:0003735">
    <property type="term" value="F:structural constituent of ribosome"/>
    <property type="evidence" value="ECO:0007669"/>
    <property type="project" value="InterPro"/>
</dbReference>
<dbReference type="GO" id="GO:0006412">
    <property type="term" value="P:translation"/>
    <property type="evidence" value="ECO:0007669"/>
    <property type="project" value="UniProtKB-UniRule"/>
</dbReference>
<dbReference type="CDD" id="cd00353">
    <property type="entry name" value="Ribosomal_S15p_S13e"/>
    <property type="match status" value="1"/>
</dbReference>
<dbReference type="FunFam" id="1.10.287.10:FF:000002">
    <property type="entry name" value="30S ribosomal protein S15"/>
    <property type="match status" value="1"/>
</dbReference>
<dbReference type="Gene3D" id="6.10.250.3130">
    <property type="match status" value="1"/>
</dbReference>
<dbReference type="Gene3D" id="1.10.287.10">
    <property type="entry name" value="S15/NS1, RNA-binding"/>
    <property type="match status" value="1"/>
</dbReference>
<dbReference type="HAMAP" id="MF_01343_B">
    <property type="entry name" value="Ribosomal_uS15_B"/>
    <property type="match status" value="1"/>
</dbReference>
<dbReference type="InterPro" id="IPR000589">
    <property type="entry name" value="Ribosomal_uS15"/>
</dbReference>
<dbReference type="InterPro" id="IPR005290">
    <property type="entry name" value="Ribosomal_uS15_bac-type"/>
</dbReference>
<dbReference type="InterPro" id="IPR009068">
    <property type="entry name" value="uS15_NS1_RNA-bd_sf"/>
</dbReference>
<dbReference type="NCBIfam" id="TIGR00952">
    <property type="entry name" value="S15_bact"/>
    <property type="match status" value="1"/>
</dbReference>
<dbReference type="PANTHER" id="PTHR23321">
    <property type="entry name" value="RIBOSOMAL PROTEIN S15, BACTERIAL AND ORGANELLAR"/>
    <property type="match status" value="1"/>
</dbReference>
<dbReference type="PANTHER" id="PTHR23321:SF26">
    <property type="entry name" value="SMALL RIBOSOMAL SUBUNIT PROTEIN US15M"/>
    <property type="match status" value="1"/>
</dbReference>
<dbReference type="Pfam" id="PF00312">
    <property type="entry name" value="Ribosomal_S15"/>
    <property type="match status" value="1"/>
</dbReference>
<dbReference type="SMART" id="SM01387">
    <property type="entry name" value="Ribosomal_S15"/>
    <property type="match status" value="1"/>
</dbReference>
<dbReference type="SUPFAM" id="SSF47060">
    <property type="entry name" value="S15/NS1 RNA-binding domain"/>
    <property type="match status" value="1"/>
</dbReference>
<dbReference type="PROSITE" id="PS00362">
    <property type="entry name" value="RIBOSOMAL_S15"/>
    <property type="match status" value="1"/>
</dbReference>
<sequence>MSLSVEAKAKIVSEFGRGENDSGSTEVQVALLTAQINHLQGHFAEHKKDHHSRRGLLRMVSQRRKLLDYLKRKDVARYSALIERLGLRR</sequence>
<evidence type="ECO:0000255" key="1">
    <source>
        <dbReference type="HAMAP-Rule" id="MF_01343"/>
    </source>
</evidence>
<evidence type="ECO:0000305" key="2"/>
<keyword id="KW-0687">Ribonucleoprotein</keyword>
<keyword id="KW-0689">Ribosomal protein</keyword>
<keyword id="KW-0694">RNA-binding</keyword>
<keyword id="KW-0699">rRNA-binding</keyword>
<organism>
    <name type="scientific">Klebsiella pneumoniae subsp. pneumoniae (strain ATCC 700721 / MGH 78578)</name>
    <dbReference type="NCBI Taxonomy" id="272620"/>
    <lineage>
        <taxon>Bacteria</taxon>
        <taxon>Pseudomonadati</taxon>
        <taxon>Pseudomonadota</taxon>
        <taxon>Gammaproteobacteria</taxon>
        <taxon>Enterobacterales</taxon>
        <taxon>Enterobacteriaceae</taxon>
        <taxon>Klebsiella/Raoultella group</taxon>
        <taxon>Klebsiella</taxon>
        <taxon>Klebsiella pneumoniae complex</taxon>
    </lineage>
</organism>
<name>RS15_KLEP7</name>
<comment type="function">
    <text evidence="1">One of the primary rRNA binding proteins, it binds directly to 16S rRNA where it helps nucleate assembly of the platform of the 30S subunit by binding and bridging several RNA helices of the 16S rRNA.</text>
</comment>
<comment type="function">
    <text evidence="1">Forms an intersubunit bridge (bridge B4) with the 23S rRNA of the 50S subunit in the ribosome.</text>
</comment>
<comment type="subunit">
    <text evidence="1">Part of the 30S ribosomal subunit. Forms a bridge to the 50S subunit in the 70S ribosome, contacting the 23S rRNA.</text>
</comment>
<comment type="similarity">
    <text evidence="1">Belongs to the universal ribosomal protein uS15 family.</text>
</comment>
<proteinExistence type="inferred from homology"/>